<evidence type="ECO:0000255" key="1">
    <source>
        <dbReference type="PROSITE-ProRule" id="PRU00393"/>
    </source>
</evidence>
<evidence type="ECO:0000269" key="2">
    <source>
    </source>
</evidence>
<evidence type="ECO:0000269" key="3">
    <source>
    </source>
</evidence>
<evidence type="ECO:0000303" key="4">
    <source>
    </source>
</evidence>
<evidence type="ECO:0000303" key="5">
    <source>
    </source>
</evidence>
<evidence type="ECO:0000305" key="6"/>
<evidence type="ECO:0000305" key="7">
    <source>
    </source>
</evidence>
<feature type="chain" id="PRO_0000437061" description="Trypacidin cluster transcriptional coactivator tpcD">
    <location>
        <begin position="1"/>
        <end position="437"/>
    </location>
</feature>
<feature type="domain" description="HTH iclR-type" evidence="1">
    <location>
        <begin position="75"/>
        <end position="144"/>
    </location>
</feature>
<feature type="DNA-binding region" description="H-T-H motif" evidence="1">
    <location>
        <begin position="105"/>
        <end position="124"/>
    </location>
</feature>
<gene>
    <name evidence="4" type="primary">tpcD</name>
    <name evidence="5" type="synonym">tynD</name>
    <name type="ORF">AFUA_4G14550</name>
</gene>
<dbReference type="EMBL" id="AAHF01000005">
    <property type="protein sequence ID" value="EAL89340.1"/>
    <property type="molecule type" value="Genomic_DNA"/>
</dbReference>
<dbReference type="RefSeq" id="XP_751378.1">
    <property type="nucleotide sequence ID" value="XM_746285.1"/>
</dbReference>
<dbReference type="SMR" id="Q4WQZ4"/>
<dbReference type="STRING" id="330879.Q4WQZ4"/>
<dbReference type="EnsemblFungi" id="EAL89340">
    <property type="protein sequence ID" value="EAL89340"/>
    <property type="gene ID" value="AFUA_4G14550"/>
</dbReference>
<dbReference type="GeneID" id="3509596"/>
<dbReference type="KEGG" id="afm:AFUA_4G14550"/>
<dbReference type="VEuPathDB" id="FungiDB:Afu4g14550"/>
<dbReference type="eggNOG" id="ENOG502SM28">
    <property type="taxonomic scope" value="Eukaryota"/>
</dbReference>
<dbReference type="HOGENOM" id="CLU_005533_11_0_1"/>
<dbReference type="InParanoid" id="Q4WQZ4"/>
<dbReference type="OMA" id="LLACIQW"/>
<dbReference type="OrthoDB" id="1606438at2759"/>
<dbReference type="Proteomes" id="UP000002530">
    <property type="component" value="Chromosome 4"/>
</dbReference>
<dbReference type="GO" id="GO:0005634">
    <property type="term" value="C:nucleus"/>
    <property type="evidence" value="ECO:0007669"/>
    <property type="project" value="UniProtKB-SubCell"/>
</dbReference>
<dbReference type="GO" id="GO:0003677">
    <property type="term" value="F:DNA binding"/>
    <property type="evidence" value="ECO:0007669"/>
    <property type="project" value="UniProtKB-KW"/>
</dbReference>
<dbReference type="GO" id="GO:0044550">
    <property type="term" value="P:secondary metabolite biosynthetic process"/>
    <property type="evidence" value="ECO:0000315"/>
    <property type="project" value="AspGD"/>
</dbReference>
<dbReference type="Gene3D" id="3.40.50.150">
    <property type="entry name" value="Vaccinia Virus protein VP39"/>
    <property type="match status" value="1"/>
</dbReference>
<dbReference type="Gene3D" id="1.10.10.10">
    <property type="entry name" value="Winged helix-like DNA-binding domain superfamily/Winged helix DNA-binding domain"/>
    <property type="match status" value="1"/>
</dbReference>
<dbReference type="InterPro" id="IPR029063">
    <property type="entry name" value="SAM-dependent_MTases_sf"/>
</dbReference>
<dbReference type="InterPro" id="IPR036388">
    <property type="entry name" value="WH-like_DNA-bd_sf"/>
</dbReference>
<dbReference type="InterPro" id="IPR036390">
    <property type="entry name" value="WH_DNA-bd_sf"/>
</dbReference>
<dbReference type="PANTHER" id="PTHR43712:SF15">
    <property type="entry name" value="MONODICTYPHENONE CLUSTER TRANSCRIPTIONAL COACTIVATOR MDPA"/>
    <property type="match status" value="1"/>
</dbReference>
<dbReference type="PANTHER" id="PTHR43712">
    <property type="entry name" value="PUTATIVE (AFU_ORTHOLOGUE AFUA_4G14580)-RELATED"/>
    <property type="match status" value="1"/>
</dbReference>
<dbReference type="SUPFAM" id="SSF46785">
    <property type="entry name" value="Winged helix' DNA-binding domain"/>
    <property type="match status" value="1"/>
</dbReference>
<proteinExistence type="evidence at transcript level"/>
<name>TPCD_ASPFU</name>
<protein>
    <recommendedName>
        <fullName evidence="5">Trypacidin cluster transcriptional coactivator tpcD</fullName>
    </recommendedName>
    <alternativeName>
        <fullName evidence="4">Trypacidin synthesis protein D</fullName>
    </alternativeName>
</protein>
<sequence length="437" mass="47865">MDSITQLEARANEVAAAARRLAEYCRNARVDGACLPAVVPSEAPRAIREIQRLLLSNVDHLQILLTEPADLVQRLAVQSQLLSCLQWLGEFQVLACLPLTDTVSIADLARLSGVPEAQLARIIRFTITIGFLQEPQRGHVAHSPLSSLFVSRPSLRDAVMFLADSAAPTALQMASATGRFGDTVASETDTAYNIAFDHRDPFYFACEQRPKLQRRWSAYLQHTGGDARDLTQQVLSRVDWFNLNNACVVEVLGPQSQSVTMMLDQLHPMLHFIVQEARIPNGSTHAALHQDVRSVQIRELGGPQRVRDAAIYILNLGPLPHAILSTSVLTELRAHFSVLAANSCAMLILTAGLLLPKPGAVDARVETSVRLHDLSLLQLANDRLMEEDELVEMVHGVKDSVGRLAVVNRLHLPCTTTVALGVRYQAFGHGDSSAKSL</sequence>
<keyword id="KW-0238">DNA-binding</keyword>
<keyword id="KW-0539">Nucleus</keyword>
<keyword id="KW-1185">Reference proteome</keyword>
<keyword id="KW-0804">Transcription</keyword>
<keyword id="KW-0805">Transcription regulation</keyword>
<accession>Q4WQZ4</accession>
<reference key="1">
    <citation type="journal article" date="2005" name="Nature">
        <title>Genomic sequence of the pathogenic and allergenic filamentous fungus Aspergillus fumigatus.</title>
        <authorList>
            <person name="Nierman W.C."/>
            <person name="Pain A."/>
            <person name="Anderson M.J."/>
            <person name="Wortman J.R."/>
            <person name="Kim H.S."/>
            <person name="Arroyo J."/>
            <person name="Berriman M."/>
            <person name="Abe K."/>
            <person name="Archer D.B."/>
            <person name="Bermejo C."/>
            <person name="Bennett J.W."/>
            <person name="Bowyer P."/>
            <person name="Chen D."/>
            <person name="Collins M."/>
            <person name="Coulsen R."/>
            <person name="Davies R."/>
            <person name="Dyer P.S."/>
            <person name="Farman M.L."/>
            <person name="Fedorova N."/>
            <person name="Fedorova N.D."/>
            <person name="Feldblyum T.V."/>
            <person name="Fischer R."/>
            <person name="Fosker N."/>
            <person name="Fraser A."/>
            <person name="Garcia J.L."/>
            <person name="Garcia M.J."/>
            <person name="Goble A."/>
            <person name="Goldman G.H."/>
            <person name="Gomi K."/>
            <person name="Griffith-Jones S."/>
            <person name="Gwilliam R."/>
            <person name="Haas B.J."/>
            <person name="Haas H."/>
            <person name="Harris D.E."/>
            <person name="Horiuchi H."/>
            <person name="Huang J."/>
            <person name="Humphray S."/>
            <person name="Jimenez J."/>
            <person name="Keller N."/>
            <person name="Khouri H."/>
            <person name="Kitamoto K."/>
            <person name="Kobayashi T."/>
            <person name="Konzack S."/>
            <person name="Kulkarni R."/>
            <person name="Kumagai T."/>
            <person name="Lafton A."/>
            <person name="Latge J.-P."/>
            <person name="Li W."/>
            <person name="Lord A."/>
            <person name="Lu C."/>
            <person name="Majoros W.H."/>
            <person name="May G.S."/>
            <person name="Miller B.L."/>
            <person name="Mohamoud Y."/>
            <person name="Molina M."/>
            <person name="Monod M."/>
            <person name="Mouyna I."/>
            <person name="Mulligan S."/>
            <person name="Murphy L.D."/>
            <person name="O'Neil S."/>
            <person name="Paulsen I."/>
            <person name="Penalva M.A."/>
            <person name="Pertea M."/>
            <person name="Price C."/>
            <person name="Pritchard B.L."/>
            <person name="Quail M.A."/>
            <person name="Rabbinowitsch E."/>
            <person name="Rawlins N."/>
            <person name="Rajandream M.A."/>
            <person name="Reichard U."/>
            <person name="Renauld H."/>
            <person name="Robson G.D."/>
            <person name="Rodriguez de Cordoba S."/>
            <person name="Rodriguez-Pena J.M."/>
            <person name="Ronning C.M."/>
            <person name="Rutter S."/>
            <person name="Salzberg S.L."/>
            <person name="Sanchez M."/>
            <person name="Sanchez-Ferrero J.C."/>
            <person name="Saunders D."/>
            <person name="Seeger K."/>
            <person name="Squares R."/>
            <person name="Squares S."/>
            <person name="Takeuchi M."/>
            <person name="Tekaia F."/>
            <person name="Turner G."/>
            <person name="Vazquez de Aldana C.R."/>
            <person name="Weidman J."/>
            <person name="White O."/>
            <person name="Woodward J.R."/>
            <person name="Yu J.-H."/>
            <person name="Fraser C.M."/>
            <person name="Galagan J.E."/>
            <person name="Asai K."/>
            <person name="Machida M."/>
            <person name="Hall N."/>
            <person name="Barrell B.G."/>
            <person name="Denning D.W."/>
        </authorList>
    </citation>
    <scope>NUCLEOTIDE SEQUENCE [LARGE SCALE GENOMIC DNA]</scope>
    <source>
        <strain>ATCC MYA-4609 / CBS 101355 / FGSC A1100 / Af293</strain>
    </source>
</reference>
<reference key="2">
    <citation type="journal article" date="2012" name="PLoS ONE">
        <title>Trypacidin, a spore-borne toxin from Aspergillus fumigatus, is cytotoxic to lung cells.</title>
        <authorList>
            <person name="Gauthier T."/>
            <person name="Wang X."/>
            <person name="Sifuentes Dos Santos J."/>
            <person name="Fysikopoulos A."/>
            <person name="Tadrist S."/>
            <person name="Canlet C."/>
            <person name="Artigot M.P."/>
            <person name="Loiseau N."/>
            <person name="Oswald I.P."/>
            <person name="Puel O."/>
        </authorList>
    </citation>
    <scope>FUNCTION</scope>
    <scope>TISSUE SPECIFICITY</scope>
</reference>
<reference key="3">
    <citation type="journal article" date="2015" name="Appl. Microbiol. Biotechnol.">
        <title>Identification of the antiphagocytic trypacidin gene cluster in the human-pathogenic fungus Aspergillus fumigatus.</title>
        <authorList>
            <person name="Mattern D.J."/>
            <person name="Schoeler H."/>
            <person name="Weber J."/>
            <person name="Novohradska S."/>
            <person name="Kraibooj K."/>
            <person name="Dahse H.M."/>
            <person name="Hillmann F."/>
            <person name="Valiante V."/>
            <person name="Figge M.T."/>
            <person name="Brakhage A.A."/>
        </authorList>
    </citation>
    <scope>FUNCTION</scope>
</reference>
<reference key="4">
    <citation type="journal article" date="2016" name="Environ. Microbiol.">
        <title>Redundant synthesis of a conidial polyketide by two distinct secondary metabolite clusters in Aspergillus fumigatus.</title>
        <authorList>
            <person name="Throckmorton K."/>
            <person name="Lim F.Y."/>
            <person name="Kontoyiannis D.P."/>
            <person name="Zheng W."/>
            <person name="Keller N.P."/>
        </authorList>
    </citation>
    <scope>FUNCTION</scope>
    <scope>DISRUPTION PHENOTYPE</scope>
    <scope>INDUCTION</scope>
</reference>
<organism>
    <name type="scientific">Aspergillus fumigatus (strain ATCC MYA-4609 / CBS 101355 / FGSC A1100 / Af293)</name>
    <name type="common">Neosartorya fumigata</name>
    <dbReference type="NCBI Taxonomy" id="330879"/>
    <lineage>
        <taxon>Eukaryota</taxon>
        <taxon>Fungi</taxon>
        <taxon>Dikarya</taxon>
        <taxon>Ascomycota</taxon>
        <taxon>Pezizomycotina</taxon>
        <taxon>Eurotiomycetes</taxon>
        <taxon>Eurotiomycetidae</taxon>
        <taxon>Eurotiales</taxon>
        <taxon>Aspergillaceae</taxon>
        <taxon>Aspergillus</taxon>
        <taxon>Aspergillus subgen. Fumigati</taxon>
    </lineage>
</organism>
<comment type="function">
    <text evidence="2 3">Transcriptional coactivator; part of the gene cluster that mediates the biosynthesis of trypacidin, a mycotoxin with antiprotozoal activity and that plays a role in the infection process (PubMed:26242966, PubMed:26278536). With tpcE, coregulates the production of trypacidin (PubMed:26242966, PubMed:26278536).</text>
</comment>
<comment type="subcellular location">
    <subcellularLocation>
        <location evidence="6">Nucleus</location>
    </subcellularLocation>
</comment>
<comment type="tissue specificity">
    <text evidence="7">Specifically expressed in conidia (PubMed:22319557).</text>
</comment>
<comment type="induction">
    <text evidence="2">Expression is positively regulated by the transcription factors brlA and laeA (PubMed:26242966).</text>
</comment>
<comment type="disruption phenotype">
    <text evidence="2 3">Resulted in loss of trypacidin production (PubMed:26242966, PubMed:26278536).</text>
</comment>